<protein>
    <recommendedName>
        <fullName>Tubulin beta chain</fullName>
    </recommendedName>
    <alternativeName>
        <fullName>Beta-tubulin</fullName>
    </alternativeName>
</protein>
<evidence type="ECO:0000250" key="1">
    <source>
        <dbReference type="UniProtKB" id="P68363"/>
    </source>
</evidence>
<evidence type="ECO:0000250" key="2">
    <source>
        <dbReference type="UniProtKB" id="Q13509"/>
    </source>
</evidence>
<evidence type="ECO:0000256" key="3">
    <source>
        <dbReference type="SAM" id="MobiDB-lite"/>
    </source>
</evidence>
<evidence type="ECO:0000305" key="4"/>
<proteinExistence type="inferred from homology"/>
<gene>
    <name type="primary">TUB2</name>
    <name type="ORF">FGRRES_09530_M</name>
    <name type="ORF">FGSG_09530</name>
</gene>
<feature type="chain" id="PRO_0000048415" description="Tubulin beta chain">
    <location>
        <begin position="1"/>
        <end position="446"/>
    </location>
</feature>
<feature type="region of interest" description="Disordered" evidence="3">
    <location>
        <begin position="422"/>
        <end position="446"/>
    </location>
</feature>
<feature type="compositionally biased region" description="Acidic residues" evidence="3">
    <location>
        <begin position="429"/>
        <end position="446"/>
    </location>
</feature>
<feature type="binding site" evidence="2">
    <location>
        <position position="11"/>
    </location>
    <ligand>
        <name>GTP</name>
        <dbReference type="ChEBI" id="CHEBI:37565"/>
    </ligand>
</feature>
<feature type="binding site" evidence="1">
    <location>
        <position position="69"/>
    </location>
    <ligand>
        <name>GTP</name>
        <dbReference type="ChEBI" id="CHEBI:37565"/>
    </ligand>
</feature>
<feature type="binding site" evidence="1">
    <location>
        <position position="69"/>
    </location>
    <ligand>
        <name>Mg(2+)</name>
        <dbReference type="ChEBI" id="CHEBI:18420"/>
    </ligand>
</feature>
<feature type="binding site" evidence="2">
    <location>
        <position position="138"/>
    </location>
    <ligand>
        <name>GTP</name>
        <dbReference type="ChEBI" id="CHEBI:37565"/>
    </ligand>
</feature>
<feature type="binding site" evidence="2">
    <location>
        <position position="142"/>
    </location>
    <ligand>
        <name>GTP</name>
        <dbReference type="ChEBI" id="CHEBI:37565"/>
    </ligand>
</feature>
<feature type="binding site" evidence="2">
    <location>
        <position position="143"/>
    </location>
    <ligand>
        <name>GTP</name>
        <dbReference type="ChEBI" id="CHEBI:37565"/>
    </ligand>
</feature>
<feature type="binding site" evidence="2">
    <location>
        <position position="144"/>
    </location>
    <ligand>
        <name>GTP</name>
        <dbReference type="ChEBI" id="CHEBI:37565"/>
    </ligand>
</feature>
<feature type="binding site" evidence="2">
    <location>
        <position position="204"/>
    </location>
    <ligand>
        <name>GTP</name>
        <dbReference type="ChEBI" id="CHEBI:37565"/>
    </ligand>
</feature>
<feature type="binding site" evidence="2">
    <location>
        <position position="226"/>
    </location>
    <ligand>
        <name>GTP</name>
        <dbReference type="ChEBI" id="CHEBI:37565"/>
    </ligand>
</feature>
<dbReference type="EMBL" id="DS231668">
    <property type="protein sequence ID" value="ESU16129.1"/>
    <property type="molecule type" value="Genomic_DNA"/>
</dbReference>
<dbReference type="EMBL" id="HG970335">
    <property type="protein sequence ID" value="CEF85047.1"/>
    <property type="molecule type" value="Genomic_DNA"/>
</dbReference>
<dbReference type="RefSeq" id="XP_011328187.1">
    <property type="nucleotide sequence ID" value="XM_011329885.1"/>
</dbReference>
<dbReference type="SMR" id="Q4HZS8"/>
<dbReference type="FunCoup" id="Q4HZS8">
    <property type="interactions" value="1283"/>
</dbReference>
<dbReference type="STRING" id="229533.Q4HZS8"/>
<dbReference type="GeneID" id="23556480"/>
<dbReference type="KEGG" id="fgr:FGSG_09530"/>
<dbReference type="VEuPathDB" id="FungiDB:FGRAMPH1_01G26865"/>
<dbReference type="eggNOG" id="KOG1375">
    <property type="taxonomic scope" value="Eukaryota"/>
</dbReference>
<dbReference type="HOGENOM" id="CLU_015718_1_1_1"/>
<dbReference type="InParanoid" id="Q4HZS8"/>
<dbReference type="OrthoDB" id="44028at110618"/>
<dbReference type="Proteomes" id="UP000070720">
    <property type="component" value="Chromosome 4"/>
</dbReference>
<dbReference type="GO" id="GO:0005737">
    <property type="term" value="C:cytoplasm"/>
    <property type="evidence" value="ECO:0007669"/>
    <property type="project" value="UniProtKB-KW"/>
</dbReference>
<dbReference type="GO" id="GO:0005874">
    <property type="term" value="C:microtubule"/>
    <property type="evidence" value="ECO:0007669"/>
    <property type="project" value="UniProtKB-KW"/>
</dbReference>
<dbReference type="GO" id="GO:0005525">
    <property type="term" value="F:GTP binding"/>
    <property type="evidence" value="ECO:0007669"/>
    <property type="project" value="UniProtKB-KW"/>
</dbReference>
<dbReference type="GO" id="GO:0003924">
    <property type="term" value="F:GTPase activity"/>
    <property type="evidence" value="ECO:0007669"/>
    <property type="project" value="InterPro"/>
</dbReference>
<dbReference type="GO" id="GO:0046872">
    <property type="term" value="F:metal ion binding"/>
    <property type="evidence" value="ECO:0007669"/>
    <property type="project" value="UniProtKB-KW"/>
</dbReference>
<dbReference type="GO" id="GO:0005200">
    <property type="term" value="F:structural constituent of cytoskeleton"/>
    <property type="evidence" value="ECO:0007669"/>
    <property type="project" value="InterPro"/>
</dbReference>
<dbReference type="GO" id="GO:0007017">
    <property type="term" value="P:microtubule-based process"/>
    <property type="evidence" value="ECO:0007669"/>
    <property type="project" value="InterPro"/>
</dbReference>
<dbReference type="CDD" id="cd02187">
    <property type="entry name" value="beta_tubulin"/>
    <property type="match status" value="1"/>
</dbReference>
<dbReference type="FunFam" id="1.10.287.600:FF:000003">
    <property type="entry name" value="Tubulin beta chain"/>
    <property type="match status" value="1"/>
</dbReference>
<dbReference type="FunFam" id="3.30.1330.20:FF:000002">
    <property type="entry name" value="Tubulin beta chain"/>
    <property type="match status" value="1"/>
</dbReference>
<dbReference type="FunFam" id="3.40.50.1440:FF:000009">
    <property type="entry name" value="Tubulin beta chain"/>
    <property type="match status" value="1"/>
</dbReference>
<dbReference type="Gene3D" id="1.10.287.600">
    <property type="entry name" value="Helix hairpin bin"/>
    <property type="match status" value="1"/>
</dbReference>
<dbReference type="Gene3D" id="3.30.1330.20">
    <property type="entry name" value="Tubulin/FtsZ, C-terminal domain"/>
    <property type="match status" value="1"/>
</dbReference>
<dbReference type="Gene3D" id="3.40.50.1440">
    <property type="entry name" value="Tubulin/FtsZ, GTPase domain"/>
    <property type="match status" value="1"/>
</dbReference>
<dbReference type="InterPro" id="IPR013838">
    <property type="entry name" value="Beta-tubulin_BS"/>
</dbReference>
<dbReference type="InterPro" id="IPR002453">
    <property type="entry name" value="Beta_tubulin"/>
</dbReference>
<dbReference type="InterPro" id="IPR008280">
    <property type="entry name" value="Tub_FtsZ_C"/>
</dbReference>
<dbReference type="InterPro" id="IPR000217">
    <property type="entry name" value="Tubulin"/>
</dbReference>
<dbReference type="InterPro" id="IPR037103">
    <property type="entry name" value="Tubulin/FtsZ-like_C"/>
</dbReference>
<dbReference type="InterPro" id="IPR018316">
    <property type="entry name" value="Tubulin/FtsZ_2-layer-sand-dom"/>
</dbReference>
<dbReference type="InterPro" id="IPR036525">
    <property type="entry name" value="Tubulin/FtsZ_GTPase_sf"/>
</dbReference>
<dbReference type="InterPro" id="IPR023123">
    <property type="entry name" value="Tubulin_C"/>
</dbReference>
<dbReference type="InterPro" id="IPR017975">
    <property type="entry name" value="Tubulin_CS"/>
</dbReference>
<dbReference type="InterPro" id="IPR003008">
    <property type="entry name" value="Tubulin_FtsZ_GTPase"/>
</dbReference>
<dbReference type="PANTHER" id="PTHR11588">
    <property type="entry name" value="TUBULIN"/>
    <property type="match status" value="1"/>
</dbReference>
<dbReference type="Pfam" id="PF00091">
    <property type="entry name" value="Tubulin"/>
    <property type="match status" value="1"/>
</dbReference>
<dbReference type="Pfam" id="PF03953">
    <property type="entry name" value="Tubulin_C"/>
    <property type="match status" value="1"/>
</dbReference>
<dbReference type="PRINTS" id="PR01163">
    <property type="entry name" value="BETATUBULIN"/>
</dbReference>
<dbReference type="PRINTS" id="PR01161">
    <property type="entry name" value="TUBULIN"/>
</dbReference>
<dbReference type="SMART" id="SM00864">
    <property type="entry name" value="Tubulin"/>
    <property type="match status" value="1"/>
</dbReference>
<dbReference type="SMART" id="SM00865">
    <property type="entry name" value="Tubulin_C"/>
    <property type="match status" value="1"/>
</dbReference>
<dbReference type="SUPFAM" id="SSF55307">
    <property type="entry name" value="Tubulin C-terminal domain-like"/>
    <property type="match status" value="1"/>
</dbReference>
<dbReference type="SUPFAM" id="SSF52490">
    <property type="entry name" value="Tubulin nucleotide-binding domain-like"/>
    <property type="match status" value="1"/>
</dbReference>
<dbReference type="PROSITE" id="PS00227">
    <property type="entry name" value="TUBULIN"/>
    <property type="match status" value="1"/>
</dbReference>
<dbReference type="PROSITE" id="PS00228">
    <property type="entry name" value="TUBULIN_B_AUTOREG"/>
    <property type="match status" value="1"/>
</dbReference>
<name>TBB_GIBZE</name>
<sequence length="446" mass="49793">MREIVHLQTGQCGNQIGAAFWQTISGEHGLDSNGVYNGTSELQLERMSVYFNEASGNKYVPRAVLVDLEPGTMDAVRAGPFGQLFRPDNFVFGQSGAGNNWAKGHYTEGAELVDQVLDVVRREAEGCDCLQGFQITHSLGGGTGAGMGTLLISKIREEFPDRMMATFSVVPSPKVSDTVVEPYNATLSVHQLVENSDETFCIDNEALYDICMRTLKLSNPSYGDLNYLVSAVMSGVTTCLRFPGQLNSDLRKLAVNMVPFPRLHFFMVGFAPLTSRGAHSFRAVSVPELTQQMFDPKNMMAASDFRNGRYLTCSAIFRGRVAMKEVEDQMRNVQSKNSSYFVEWIPNNIQTALCAIPPRGLTMSSTFIGNSTSIQELFKRVGEQFTAMFRRKAFLHWYTGEGMDEMEFTEAESNMNDLVSEYQQYQDAGIDEEEEEYEEELPEGEE</sequence>
<accession>Q4HZS8</accession>
<accession>A0A0E0SF34</accession>
<accession>V6RPH3</accession>
<organism>
    <name type="scientific">Gibberella zeae (strain ATCC MYA-4620 / CBS 123657 / FGSC 9075 / NRRL 31084 / PH-1)</name>
    <name type="common">Wheat head blight fungus</name>
    <name type="synonym">Fusarium graminearum</name>
    <dbReference type="NCBI Taxonomy" id="229533"/>
    <lineage>
        <taxon>Eukaryota</taxon>
        <taxon>Fungi</taxon>
        <taxon>Dikarya</taxon>
        <taxon>Ascomycota</taxon>
        <taxon>Pezizomycotina</taxon>
        <taxon>Sordariomycetes</taxon>
        <taxon>Hypocreomycetidae</taxon>
        <taxon>Hypocreales</taxon>
        <taxon>Nectriaceae</taxon>
        <taxon>Fusarium</taxon>
    </lineage>
</organism>
<reference key="1">
    <citation type="journal article" date="2007" name="Science">
        <title>The Fusarium graminearum genome reveals a link between localized polymorphism and pathogen specialization.</title>
        <authorList>
            <person name="Cuomo C.A."/>
            <person name="Gueldener U."/>
            <person name="Xu J.-R."/>
            <person name="Trail F."/>
            <person name="Turgeon B.G."/>
            <person name="Di Pietro A."/>
            <person name="Walton J.D."/>
            <person name="Ma L.-J."/>
            <person name="Baker S.E."/>
            <person name="Rep M."/>
            <person name="Adam G."/>
            <person name="Antoniw J."/>
            <person name="Baldwin T."/>
            <person name="Calvo S.E."/>
            <person name="Chang Y.-L."/>
            <person name="DeCaprio D."/>
            <person name="Gale L.R."/>
            <person name="Gnerre S."/>
            <person name="Goswami R.S."/>
            <person name="Hammond-Kosack K."/>
            <person name="Harris L.J."/>
            <person name="Hilburn K."/>
            <person name="Kennell J.C."/>
            <person name="Kroken S."/>
            <person name="Magnuson J.K."/>
            <person name="Mannhaupt G."/>
            <person name="Mauceli E.W."/>
            <person name="Mewes H.-W."/>
            <person name="Mitterbauer R."/>
            <person name="Muehlbauer G."/>
            <person name="Muensterkoetter M."/>
            <person name="Nelson D."/>
            <person name="O'Donnell K."/>
            <person name="Ouellet T."/>
            <person name="Qi W."/>
            <person name="Quesneville H."/>
            <person name="Roncero M.I.G."/>
            <person name="Seong K.-Y."/>
            <person name="Tetko I.V."/>
            <person name="Urban M."/>
            <person name="Waalwijk C."/>
            <person name="Ward T.J."/>
            <person name="Yao J."/>
            <person name="Birren B.W."/>
            <person name="Kistler H.C."/>
        </authorList>
    </citation>
    <scope>NUCLEOTIDE SEQUENCE [LARGE SCALE GENOMIC DNA]</scope>
    <source>
        <strain>ATCC MYA-4620 / CBS 123657 / FGSC 9075 / NRRL 31084 / PH-1</strain>
    </source>
</reference>
<reference key="2">
    <citation type="journal article" date="2010" name="Nature">
        <title>Comparative genomics reveals mobile pathogenicity chromosomes in Fusarium.</title>
        <authorList>
            <person name="Ma L.-J."/>
            <person name="van der Does H.C."/>
            <person name="Borkovich K.A."/>
            <person name="Coleman J.J."/>
            <person name="Daboussi M.-J."/>
            <person name="Di Pietro A."/>
            <person name="Dufresne M."/>
            <person name="Freitag M."/>
            <person name="Grabherr M."/>
            <person name="Henrissat B."/>
            <person name="Houterman P.M."/>
            <person name="Kang S."/>
            <person name="Shim W.-B."/>
            <person name="Woloshuk C."/>
            <person name="Xie X."/>
            <person name="Xu J.-R."/>
            <person name="Antoniw J."/>
            <person name="Baker S.E."/>
            <person name="Bluhm B.H."/>
            <person name="Breakspear A."/>
            <person name="Brown D.W."/>
            <person name="Butchko R.A.E."/>
            <person name="Chapman S."/>
            <person name="Coulson R."/>
            <person name="Coutinho P.M."/>
            <person name="Danchin E.G.J."/>
            <person name="Diener A."/>
            <person name="Gale L.R."/>
            <person name="Gardiner D.M."/>
            <person name="Goff S."/>
            <person name="Hammond-Kosack K.E."/>
            <person name="Hilburn K."/>
            <person name="Hua-Van A."/>
            <person name="Jonkers W."/>
            <person name="Kazan K."/>
            <person name="Kodira C.D."/>
            <person name="Koehrsen M."/>
            <person name="Kumar L."/>
            <person name="Lee Y.-H."/>
            <person name="Li L."/>
            <person name="Manners J.M."/>
            <person name="Miranda-Saavedra D."/>
            <person name="Mukherjee M."/>
            <person name="Park G."/>
            <person name="Park J."/>
            <person name="Park S.-Y."/>
            <person name="Proctor R.H."/>
            <person name="Regev A."/>
            <person name="Ruiz-Roldan M.C."/>
            <person name="Sain D."/>
            <person name="Sakthikumar S."/>
            <person name="Sykes S."/>
            <person name="Schwartz D.C."/>
            <person name="Turgeon B.G."/>
            <person name="Wapinski I."/>
            <person name="Yoder O."/>
            <person name="Young S."/>
            <person name="Zeng Q."/>
            <person name="Zhou S."/>
            <person name="Galagan J."/>
            <person name="Cuomo C.A."/>
            <person name="Kistler H.C."/>
            <person name="Rep M."/>
        </authorList>
    </citation>
    <scope>GENOME REANNOTATION</scope>
    <source>
        <strain>ATCC MYA-4620 / CBS 123657 / FGSC 9075 / NRRL 31084 / PH-1</strain>
    </source>
</reference>
<reference key="3">
    <citation type="journal article" date="2015" name="BMC Genomics">
        <title>The completed genome sequence of the pathogenic ascomycete fungus Fusarium graminearum.</title>
        <authorList>
            <person name="King R."/>
            <person name="Urban M."/>
            <person name="Hammond-Kosack M.C.U."/>
            <person name="Hassani-Pak K."/>
            <person name="Hammond-Kosack K.E."/>
        </authorList>
    </citation>
    <scope>NUCLEOTIDE SEQUENCE [LARGE SCALE GENOMIC DNA]</scope>
    <source>
        <strain>ATCC MYA-4620 / CBS 123657 / FGSC 9075 / NRRL 31084 / PH-1</strain>
    </source>
</reference>
<comment type="function">
    <text>Tubulin is the major constituent of microtubules, a cylinder consisting of laterally associated linear protofilaments composed of alpha- and beta-tubulin heterodimers. Microtubules grow by the addition of GTP-tubulin dimers to the microtubule end, where a stabilizing cap forms. Below the cap, tubulin dimers are in GDP-bound state, owing to GTPase activity of alpha-tubulin.</text>
</comment>
<comment type="cofactor">
    <cofactor evidence="1">
        <name>Mg(2+)</name>
        <dbReference type="ChEBI" id="CHEBI:18420"/>
    </cofactor>
</comment>
<comment type="subunit">
    <text>Dimer of alpha and beta chains. A typical microtubule is a hollow water-filled tube with an outer diameter of 25 nm and an inner diameter of 15 nM. Alpha-beta heterodimers associate head-to-tail to form protofilaments running lengthwise along the microtubule wall with the beta-tubulin subunit facing the microtubule plus end conferring a structural polarity. Microtubules usually have 13 protofilaments but different protofilament numbers can be found in some organisms and specialized cells.</text>
</comment>
<comment type="subcellular location">
    <subcellularLocation>
        <location>Cytoplasm</location>
        <location>Cytoskeleton</location>
    </subcellularLocation>
</comment>
<comment type="similarity">
    <text evidence="4">Belongs to the tubulin family.</text>
</comment>
<keyword id="KW-0963">Cytoplasm</keyword>
<keyword id="KW-0206">Cytoskeleton</keyword>
<keyword id="KW-0342">GTP-binding</keyword>
<keyword id="KW-0460">Magnesium</keyword>
<keyword id="KW-0479">Metal-binding</keyword>
<keyword id="KW-0493">Microtubule</keyword>
<keyword id="KW-0547">Nucleotide-binding</keyword>
<keyword id="KW-1185">Reference proteome</keyword>